<organism>
    <name type="scientific">Rattus norvegicus</name>
    <name type="common">Rat</name>
    <dbReference type="NCBI Taxonomy" id="10116"/>
    <lineage>
        <taxon>Eukaryota</taxon>
        <taxon>Metazoa</taxon>
        <taxon>Chordata</taxon>
        <taxon>Craniata</taxon>
        <taxon>Vertebrata</taxon>
        <taxon>Euteleostomi</taxon>
        <taxon>Mammalia</taxon>
        <taxon>Eutheria</taxon>
        <taxon>Euarchontoglires</taxon>
        <taxon>Glires</taxon>
        <taxon>Rodentia</taxon>
        <taxon>Myomorpha</taxon>
        <taxon>Muroidea</taxon>
        <taxon>Muridae</taxon>
        <taxon>Murinae</taxon>
        <taxon>Rattus</taxon>
    </lineage>
</organism>
<keyword id="KW-1003">Cell membrane</keyword>
<keyword id="KW-0297">G-protein coupled receptor</keyword>
<keyword id="KW-0325">Glycoprotein</keyword>
<keyword id="KW-0472">Membrane</keyword>
<keyword id="KW-0675">Receptor</keyword>
<keyword id="KW-1185">Reference proteome</keyword>
<keyword id="KW-0807">Transducer</keyword>
<keyword id="KW-0812">Transmembrane</keyword>
<keyword id="KW-1133">Transmembrane helix</keyword>
<reference key="1">
    <citation type="journal article" date="1997" name="Brain Res.">
        <title>The isolation and characterization of a novel G protein-coupled receptor regulated by immunologic challenge.</title>
        <authorList>
            <person name="Charlton M.E."/>
            <person name="Williams A.S."/>
            <person name="Fogliano M."/>
            <person name="Sweetnam P.M."/>
            <person name="Duman R.S."/>
        </authorList>
    </citation>
    <scope>NUCLEOTIDE SEQUENCE [MRNA]</scope>
</reference>
<dbReference type="EMBL" id="U76206">
    <property type="protein sequence ID" value="AAB71745.1"/>
    <property type="molecule type" value="mRNA"/>
</dbReference>
<dbReference type="RefSeq" id="NP_598261.1">
    <property type="nucleotide sequence ID" value="NM_133577.1"/>
</dbReference>
<dbReference type="SMR" id="O35881"/>
<dbReference type="FunCoup" id="O35881">
    <property type="interactions" value="59"/>
</dbReference>
<dbReference type="STRING" id="10116.ENSRNOP00000073889"/>
<dbReference type="BindingDB" id="O35881"/>
<dbReference type="ChEMBL" id="CHEMBL4295660"/>
<dbReference type="GuidetoPHARMACOLOGY" id="330"/>
<dbReference type="GlyCosmos" id="O35881">
    <property type="glycosylation" value="2 sites, No reported glycans"/>
</dbReference>
<dbReference type="GlyGen" id="O35881">
    <property type="glycosylation" value="2 sites"/>
</dbReference>
<dbReference type="PhosphoSitePlus" id="O35881"/>
<dbReference type="GeneID" id="171108"/>
<dbReference type="KEGG" id="rno:171108"/>
<dbReference type="UCSC" id="RGD:70912">
    <property type="organism name" value="rat"/>
</dbReference>
<dbReference type="AGR" id="RGD:70912"/>
<dbReference type="CTD" id="9934"/>
<dbReference type="RGD" id="70912">
    <property type="gene designation" value="P2ry14"/>
</dbReference>
<dbReference type="InParanoid" id="O35881"/>
<dbReference type="Reactome" id="R-RNO-417957">
    <property type="pathway name" value="P2Y receptors"/>
</dbReference>
<dbReference type="Reactome" id="R-RNO-418594">
    <property type="pathway name" value="G alpha (i) signalling events"/>
</dbReference>
<dbReference type="PRO" id="PR:O35881"/>
<dbReference type="Proteomes" id="UP000002494">
    <property type="component" value="Unplaced"/>
</dbReference>
<dbReference type="GO" id="GO:0005886">
    <property type="term" value="C:plasma membrane"/>
    <property type="evidence" value="ECO:0007669"/>
    <property type="project" value="UniProtKB-SubCell"/>
</dbReference>
<dbReference type="GO" id="GO:0045028">
    <property type="term" value="F:G protein-coupled purinergic nucleotide receptor activity"/>
    <property type="evidence" value="ECO:0000318"/>
    <property type="project" value="GO_Central"/>
</dbReference>
<dbReference type="GO" id="GO:0007186">
    <property type="term" value="P:G protein-coupled receptor signaling pathway"/>
    <property type="evidence" value="ECO:0000318"/>
    <property type="project" value="GO_Central"/>
</dbReference>
<dbReference type="GO" id="GO:0061484">
    <property type="term" value="P:hematopoietic stem cell homeostasis"/>
    <property type="evidence" value="ECO:0000266"/>
    <property type="project" value="RGD"/>
</dbReference>
<dbReference type="GO" id="GO:0006955">
    <property type="term" value="P:immune response"/>
    <property type="evidence" value="ECO:0000315"/>
    <property type="project" value="RGD"/>
</dbReference>
<dbReference type="FunFam" id="1.20.1070.10:FF:000049">
    <property type="entry name" value="G-protein coupled receptor 87"/>
    <property type="match status" value="1"/>
</dbReference>
<dbReference type="Gene3D" id="1.20.1070.10">
    <property type="entry name" value="Rhodopsin 7-helix transmembrane proteins"/>
    <property type="match status" value="1"/>
</dbReference>
<dbReference type="InterPro" id="IPR000276">
    <property type="entry name" value="GPCR_Rhodpsn"/>
</dbReference>
<dbReference type="InterPro" id="IPR017452">
    <property type="entry name" value="GPCR_Rhodpsn_7TM"/>
</dbReference>
<dbReference type="InterPro" id="IPR005466">
    <property type="entry name" value="P2Y14_rcpt"/>
</dbReference>
<dbReference type="PANTHER" id="PTHR24233:SF3">
    <property type="entry name" value="P2Y PURINOCEPTOR 14"/>
    <property type="match status" value="1"/>
</dbReference>
<dbReference type="PANTHER" id="PTHR24233">
    <property type="entry name" value="P2Y PURINOCEPTOR-RELATED G-PROTEIN COUPLED RECEPTOR"/>
    <property type="match status" value="1"/>
</dbReference>
<dbReference type="Pfam" id="PF00001">
    <property type="entry name" value="7tm_1"/>
    <property type="match status" value="1"/>
</dbReference>
<dbReference type="PRINTS" id="PR00237">
    <property type="entry name" value="GPCRRHODOPSN"/>
</dbReference>
<dbReference type="PRINTS" id="PR01157">
    <property type="entry name" value="P2YPURNOCPTR"/>
</dbReference>
<dbReference type="PRINTS" id="PR01655">
    <property type="entry name" value="UDPGLUCOSER"/>
</dbReference>
<dbReference type="SUPFAM" id="SSF81321">
    <property type="entry name" value="Family A G protein-coupled receptor-like"/>
    <property type="match status" value="1"/>
</dbReference>
<dbReference type="PROSITE" id="PS50262">
    <property type="entry name" value="G_PROTEIN_RECEP_F1_2"/>
    <property type="match status" value="1"/>
</dbReference>
<feature type="chain" id="PRO_0000070046" description="P2Y purinoceptor 14">
    <location>
        <begin position="1"/>
        <end position="305"/>
    </location>
</feature>
<feature type="topological domain" description="Extracellular" evidence="2">
    <location>
        <begin position="1"/>
        <end position="29"/>
    </location>
</feature>
<feature type="transmembrane region" description="Helical; Name=1" evidence="2">
    <location>
        <begin position="30"/>
        <end position="50"/>
    </location>
</feature>
<feature type="topological domain" description="Cytoplasmic" evidence="2">
    <location>
        <begin position="51"/>
        <end position="55"/>
    </location>
</feature>
<feature type="transmembrane region" description="Helical; Name=2" evidence="2">
    <location>
        <begin position="56"/>
        <end position="76"/>
    </location>
</feature>
<feature type="topological domain" description="Extracellular" evidence="2">
    <location>
        <begin position="77"/>
        <end position="96"/>
    </location>
</feature>
<feature type="transmembrane region" description="Helical; Name=3" evidence="2">
    <location>
        <begin position="97"/>
        <end position="117"/>
    </location>
</feature>
<feature type="topological domain" description="Cytoplasmic" evidence="2">
    <location>
        <begin position="118"/>
        <end position="139"/>
    </location>
</feature>
<feature type="transmembrane region" description="Helical; Name=4" evidence="2">
    <location>
        <begin position="140"/>
        <end position="160"/>
    </location>
</feature>
<feature type="topological domain" description="Extracellular" evidence="2">
    <location>
        <begin position="161"/>
        <end position="188"/>
    </location>
</feature>
<feature type="transmembrane region" description="Helical; Name=5" evidence="2">
    <location>
        <begin position="189"/>
        <end position="209"/>
    </location>
</feature>
<feature type="topological domain" description="Cytoplasmic" evidence="2">
    <location>
        <begin position="210"/>
        <end position="234"/>
    </location>
</feature>
<feature type="transmembrane region" description="Helical; Name=6" evidence="2">
    <location>
        <begin position="235"/>
        <end position="255"/>
    </location>
</feature>
<feature type="topological domain" description="Extracellular" evidence="2">
    <location>
        <begin position="256"/>
        <end position="278"/>
    </location>
</feature>
<feature type="transmembrane region" description="Helical; Name=7" evidence="2">
    <location>
        <begin position="279"/>
        <end position="299"/>
    </location>
</feature>
<feature type="topological domain" description="Cytoplasmic" evidence="2">
    <location>
        <begin position="300"/>
        <end position="305"/>
    </location>
</feature>
<feature type="glycosylation site" description="N-linked (GlcNAc...) asparagine" evidence="2">
    <location>
        <position position="3"/>
    </location>
</feature>
<feature type="glycosylation site" description="N-linked (GlcNAc...) asparagine" evidence="2">
    <location>
        <position position="161"/>
    </location>
</feature>
<name>P2Y14_RAT</name>
<comment type="function">
    <text evidence="1">Receptor for UDP-glucose coupled to G-proteins.</text>
</comment>
<comment type="subcellular location">
    <subcellularLocation>
        <location>Cell membrane</location>
        <topology>Multi-pass membrane protein</topology>
    </subcellularLocation>
</comment>
<comment type="similarity">
    <text evidence="3">Belongs to the G-protein coupled receptor 1 family.</text>
</comment>
<proteinExistence type="evidence at transcript level"/>
<sequence>MDNTTTTEPPKQPCTRNTLITQQIIPMLYCVVFITGVLLNGISGWIFFYVPSSKSFIIYLKNIVVADFLMGLTFPFKVLSDSGLGPWQLNVFVFRVSAVIFYVNMYVSIAFFGLISFDRYYKIVKPLLVSIVQSVNYSKVLSVLVWVLMLLLAVPNIILTNQSVKDVTNIQCMELKNELGRKWHKASNYVFVSIFWIVFLLLTVFYMAITRKIFKSHLKSRKNSISVKRKSSRNIFSIVLAFVACFAPYHVARIPYTKSQTEGHYSCQAKETLLYTKEFTLLLSAANVCLDPISISSYASRLEKS</sequence>
<gene>
    <name type="primary">P2ry14</name>
    <name type="synonym">Gpr105</name>
</gene>
<protein>
    <recommendedName>
        <fullName>P2Y purinoceptor 14</fullName>
        <shortName>P2Y14</shortName>
    </recommendedName>
    <alternativeName>
        <fullName>G-protein coupled receptor 105</fullName>
    </alternativeName>
    <alternativeName>
        <fullName>UDP-glucose receptor</fullName>
    </alternativeName>
    <alternativeName>
        <fullName>VTR 15-20</fullName>
    </alternativeName>
</protein>
<evidence type="ECO:0000250" key="1"/>
<evidence type="ECO:0000255" key="2"/>
<evidence type="ECO:0000255" key="3">
    <source>
        <dbReference type="PROSITE-ProRule" id="PRU00521"/>
    </source>
</evidence>
<accession>O35881</accession>